<keyword id="KW-0067">ATP-binding</keyword>
<keyword id="KW-0436">Ligase</keyword>
<keyword id="KW-0547">Nucleotide-binding</keyword>
<keyword id="KW-0648">Protein biosynthesis</keyword>
<comment type="function">
    <text evidence="1">Allows the formation of correctly charged Gln-tRNA(Gln) through the transamidation of misacylated Glu-tRNA(Gln) in organisms which lack glutaminyl-tRNA synthetase. The reaction takes place in the presence of glutamine and ATP through an activated gamma-phospho-Glu-tRNA(Gln).</text>
</comment>
<comment type="catalytic activity">
    <reaction evidence="1">
        <text>L-glutamyl-tRNA(Gln) + L-glutamine + ATP + H2O = L-glutaminyl-tRNA(Gln) + L-glutamate + ADP + phosphate + H(+)</text>
        <dbReference type="Rhea" id="RHEA:17521"/>
        <dbReference type="Rhea" id="RHEA-COMP:9681"/>
        <dbReference type="Rhea" id="RHEA-COMP:9684"/>
        <dbReference type="ChEBI" id="CHEBI:15377"/>
        <dbReference type="ChEBI" id="CHEBI:15378"/>
        <dbReference type="ChEBI" id="CHEBI:29985"/>
        <dbReference type="ChEBI" id="CHEBI:30616"/>
        <dbReference type="ChEBI" id="CHEBI:43474"/>
        <dbReference type="ChEBI" id="CHEBI:58359"/>
        <dbReference type="ChEBI" id="CHEBI:78520"/>
        <dbReference type="ChEBI" id="CHEBI:78521"/>
        <dbReference type="ChEBI" id="CHEBI:456216"/>
        <dbReference type="EC" id="6.3.5.7"/>
    </reaction>
</comment>
<comment type="subunit">
    <text evidence="1">Heterotrimer of A, B and C subunits.</text>
</comment>
<comment type="similarity">
    <text evidence="1">Belongs to the amidase family. GatA subfamily.</text>
</comment>
<proteinExistence type="inferred from homology"/>
<dbReference type="EC" id="6.3.5.7" evidence="1"/>
<dbReference type="EMBL" id="AE015929">
    <property type="protein sequence ID" value="AAO05184.1"/>
    <property type="molecule type" value="Genomic_DNA"/>
</dbReference>
<dbReference type="RefSeq" id="NP_765140.1">
    <property type="nucleotide sequence ID" value="NC_004461.1"/>
</dbReference>
<dbReference type="RefSeq" id="WP_002458553.1">
    <property type="nucleotide sequence ID" value="NZ_WBME01000010.1"/>
</dbReference>
<dbReference type="SMR" id="Q8CRU3"/>
<dbReference type="GeneID" id="50018315"/>
<dbReference type="KEGG" id="sep:SE_1585"/>
<dbReference type="PATRIC" id="fig|176280.10.peg.1549"/>
<dbReference type="eggNOG" id="COG0154">
    <property type="taxonomic scope" value="Bacteria"/>
</dbReference>
<dbReference type="HOGENOM" id="CLU_009600_0_3_9"/>
<dbReference type="OrthoDB" id="9811471at2"/>
<dbReference type="Proteomes" id="UP000001411">
    <property type="component" value="Chromosome"/>
</dbReference>
<dbReference type="GO" id="GO:0030956">
    <property type="term" value="C:glutamyl-tRNA(Gln) amidotransferase complex"/>
    <property type="evidence" value="ECO:0007669"/>
    <property type="project" value="InterPro"/>
</dbReference>
<dbReference type="GO" id="GO:0005524">
    <property type="term" value="F:ATP binding"/>
    <property type="evidence" value="ECO:0007669"/>
    <property type="project" value="UniProtKB-KW"/>
</dbReference>
<dbReference type="GO" id="GO:0050567">
    <property type="term" value="F:glutaminyl-tRNA synthase (glutamine-hydrolyzing) activity"/>
    <property type="evidence" value="ECO:0007669"/>
    <property type="project" value="UniProtKB-UniRule"/>
</dbReference>
<dbReference type="GO" id="GO:0006412">
    <property type="term" value="P:translation"/>
    <property type="evidence" value="ECO:0007669"/>
    <property type="project" value="UniProtKB-UniRule"/>
</dbReference>
<dbReference type="Gene3D" id="3.90.1300.10">
    <property type="entry name" value="Amidase signature (AS) domain"/>
    <property type="match status" value="1"/>
</dbReference>
<dbReference type="HAMAP" id="MF_00120">
    <property type="entry name" value="GatA"/>
    <property type="match status" value="1"/>
</dbReference>
<dbReference type="InterPro" id="IPR000120">
    <property type="entry name" value="Amidase"/>
</dbReference>
<dbReference type="InterPro" id="IPR020556">
    <property type="entry name" value="Amidase_CS"/>
</dbReference>
<dbReference type="InterPro" id="IPR023631">
    <property type="entry name" value="Amidase_dom"/>
</dbReference>
<dbReference type="InterPro" id="IPR036928">
    <property type="entry name" value="AS_sf"/>
</dbReference>
<dbReference type="InterPro" id="IPR004412">
    <property type="entry name" value="GatA"/>
</dbReference>
<dbReference type="NCBIfam" id="TIGR00132">
    <property type="entry name" value="gatA"/>
    <property type="match status" value="1"/>
</dbReference>
<dbReference type="PANTHER" id="PTHR11895:SF151">
    <property type="entry name" value="GLUTAMYL-TRNA(GLN) AMIDOTRANSFERASE SUBUNIT A"/>
    <property type="match status" value="1"/>
</dbReference>
<dbReference type="PANTHER" id="PTHR11895">
    <property type="entry name" value="TRANSAMIDASE"/>
    <property type="match status" value="1"/>
</dbReference>
<dbReference type="Pfam" id="PF01425">
    <property type="entry name" value="Amidase"/>
    <property type="match status" value="1"/>
</dbReference>
<dbReference type="SUPFAM" id="SSF75304">
    <property type="entry name" value="Amidase signature (AS) enzymes"/>
    <property type="match status" value="1"/>
</dbReference>
<dbReference type="PROSITE" id="PS00571">
    <property type="entry name" value="AMIDASES"/>
    <property type="match status" value="1"/>
</dbReference>
<accession>Q8CRU3</accession>
<sequence length="485" mass="52773">MSIRFESIEKLTELIKNKEIKPSDVVKDIYAAIEETDPTIKSFLALDKENAIKKAEELDELQAKDQMDGKLFGIPMGIKDNIITKDVETTCASKMLEGFVPIYESTVMNKLHDENAVLIGKLNMDEFAMGGSTETSYFKKTLNPFDHTAVPGGSSGGSAAAVAAGLVPFSLGSDTGGSIRQPASYCGVVGMKPTYGRVSRFGLVAFASSLDQIGPITRNVKDNALVLEAISGVDANDSTSAPVDDVDFTSDIGKDIKGLKIALPKEYLGEGVSEEVKTSVKEAVETLKSLGAEVDEVSLPNTKYGIPSYYVIASSEASANLARFDGIRYGYHSKEAQSLEELYKMSRSEGFGEEVKRRIFLGTFALSSGYYDAYYKKSQKVRTLIKNDFDKVFESYDVVVGPTAPTTAFNIGEEIDDPLTMYANDLLTTPVNLAGLPGISVPCGQSNGRPIGLQLIGKPFDEKTLYRVAYQFETQYNLHDAYENL</sequence>
<reference key="1">
    <citation type="journal article" date="2003" name="Mol. Microbiol.">
        <title>Genome-based analysis of virulence genes in a non-biofilm-forming Staphylococcus epidermidis strain (ATCC 12228).</title>
        <authorList>
            <person name="Zhang Y.-Q."/>
            <person name="Ren S.-X."/>
            <person name="Li H.-L."/>
            <person name="Wang Y.-X."/>
            <person name="Fu G."/>
            <person name="Yang J."/>
            <person name="Qin Z.-Q."/>
            <person name="Miao Y.-G."/>
            <person name="Wang W.-Y."/>
            <person name="Chen R.-S."/>
            <person name="Shen Y."/>
            <person name="Chen Z."/>
            <person name="Yuan Z.-H."/>
            <person name="Zhao G.-P."/>
            <person name="Qu D."/>
            <person name="Danchin A."/>
            <person name="Wen Y.-M."/>
        </authorList>
    </citation>
    <scope>NUCLEOTIDE SEQUENCE [LARGE SCALE GENOMIC DNA]</scope>
    <source>
        <strain>ATCC 12228 / FDA PCI 1200</strain>
    </source>
</reference>
<organism>
    <name type="scientific">Staphylococcus epidermidis (strain ATCC 12228 / FDA PCI 1200)</name>
    <dbReference type="NCBI Taxonomy" id="176280"/>
    <lineage>
        <taxon>Bacteria</taxon>
        <taxon>Bacillati</taxon>
        <taxon>Bacillota</taxon>
        <taxon>Bacilli</taxon>
        <taxon>Bacillales</taxon>
        <taxon>Staphylococcaceae</taxon>
        <taxon>Staphylococcus</taxon>
    </lineage>
</organism>
<feature type="chain" id="PRO_0000105205" description="Glutamyl-tRNA(Gln) amidotransferase subunit A">
    <location>
        <begin position="1"/>
        <end position="485"/>
    </location>
</feature>
<feature type="active site" description="Charge relay system" evidence="1">
    <location>
        <position position="79"/>
    </location>
</feature>
<feature type="active site" description="Charge relay system" evidence="1">
    <location>
        <position position="154"/>
    </location>
</feature>
<feature type="active site" description="Acyl-ester intermediate" evidence="1">
    <location>
        <position position="178"/>
    </location>
</feature>
<gene>
    <name evidence="1" type="primary">gatA</name>
    <name type="ordered locus">SE_1585</name>
</gene>
<protein>
    <recommendedName>
        <fullName evidence="1">Glutamyl-tRNA(Gln) amidotransferase subunit A</fullName>
        <shortName evidence="1">Glu-ADT subunit A</shortName>
        <ecNumber evidence="1">6.3.5.7</ecNumber>
    </recommendedName>
</protein>
<evidence type="ECO:0000255" key="1">
    <source>
        <dbReference type="HAMAP-Rule" id="MF_00120"/>
    </source>
</evidence>
<name>GATA_STAES</name>